<evidence type="ECO:0000255" key="1">
    <source>
        <dbReference type="HAMAP-Rule" id="MF_00113"/>
    </source>
</evidence>
<organism>
    <name type="scientific">Cupriavidus pinatubonensis (strain JMP 134 / LMG 1197)</name>
    <name type="common">Cupriavidus necator (strain JMP 134)</name>
    <dbReference type="NCBI Taxonomy" id="264198"/>
    <lineage>
        <taxon>Bacteria</taxon>
        <taxon>Pseudomonadati</taxon>
        <taxon>Pseudomonadota</taxon>
        <taxon>Betaproteobacteria</taxon>
        <taxon>Burkholderiales</taxon>
        <taxon>Burkholderiaceae</taxon>
        <taxon>Cupriavidus</taxon>
    </lineage>
</organism>
<dbReference type="EC" id="2.4.99.17" evidence="1"/>
<dbReference type="EMBL" id="CP000090">
    <property type="protein sequence ID" value="AAZ62168.1"/>
    <property type="molecule type" value="Genomic_DNA"/>
</dbReference>
<dbReference type="SMR" id="Q46XG5"/>
<dbReference type="STRING" id="264198.Reut_A2807"/>
<dbReference type="KEGG" id="reu:Reut_A2807"/>
<dbReference type="eggNOG" id="COG0809">
    <property type="taxonomic scope" value="Bacteria"/>
</dbReference>
<dbReference type="HOGENOM" id="CLU_039110_1_0_4"/>
<dbReference type="OrthoDB" id="9805933at2"/>
<dbReference type="UniPathway" id="UPA00392"/>
<dbReference type="GO" id="GO:0005737">
    <property type="term" value="C:cytoplasm"/>
    <property type="evidence" value="ECO:0007669"/>
    <property type="project" value="UniProtKB-SubCell"/>
</dbReference>
<dbReference type="GO" id="GO:0051075">
    <property type="term" value="F:S-adenosylmethionine:tRNA ribosyltransferase-isomerase activity"/>
    <property type="evidence" value="ECO:0007669"/>
    <property type="project" value="UniProtKB-EC"/>
</dbReference>
<dbReference type="GO" id="GO:0008616">
    <property type="term" value="P:queuosine biosynthetic process"/>
    <property type="evidence" value="ECO:0007669"/>
    <property type="project" value="UniProtKB-UniRule"/>
</dbReference>
<dbReference type="GO" id="GO:0002099">
    <property type="term" value="P:tRNA wobble guanine modification"/>
    <property type="evidence" value="ECO:0007669"/>
    <property type="project" value="TreeGrafter"/>
</dbReference>
<dbReference type="FunFam" id="3.40.1780.10:FF:000001">
    <property type="entry name" value="S-adenosylmethionine:tRNA ribosyltransferase-isomerase"/>
    <property type="match status" value="1"/>
</dbReference>
<dbReference type="Gene3D" id="2.40.10.240">
    <property type="entry name" value="QueA-like"/>
    <property type="match status" value="1"/>
</dbReference>
<dbReference type="Gene3D" id="3.40.1780.10">
    <property type="entry name" value="QueA-like"/>
    <property type="match status" value="1"/>
</dbReference>
<dbReference type="HAMAP" id="MF_00113">
    <property type="entry name" value="QueA"/>
    <property type="match status" value="1"/>
</dbReference>
<dbReference type="InterPro" id="IPR003699">
    <property type="entry name" value="QueA"/>
</dbReference>
<dbReference type="InterPro" id="IPR042118">
    <property type="entry name" value="QueA_dom1"/>
</dbReference>
<dbReference type="InterPro" id="IPR042119">
    <property type="entry name" value="QueA_dom2"/>
</dbReference>
<dbReference type="InterPro" id="IPR036100">
    <property type="entry name" value="QueA_sf"/>
</dbReference>
<dbReference type="NCBIfam" id="NF001140">
    <property type="entry name" value="PRK00147.1"/>
    <property type="match status" value="1"/>
</dbReference>
<dbReference type="NCBIfam" id="TIGR00113">
    <property type="entry name" value="queA"/>
    <property type="match status" value="1"/>
</dbReference>
<dbReference type="PANTHER" id="PTHR30307">
    <property type="entry name" value="S-ADENOSYLMETHIONINE:TRNA RIBOSYLTRANSFERASE-ISOMERASE"/>
    <property type="match status" value="1"/>
</dbReference>
<dbReference type="PANTHER" id="PTHR30307:SF0">
    <property type="entry name" value="S-ADENOSYLMETHIONINE:TRNA RIBOSYLTRANSFERASE-ISOMERASE"/>
    <property type="match status" value="1"/>
</dbReference>
<dbReference type="Pfam" id="PF02547">
    <property type="entry name" value="Queuosine_synth"/>
    <property type="match status" value="1"/>
</dbReference>
<dbReference type="SUPFAM" id="SSF111337">
    <property type="entry name" value="QueA-like"/>
    <property type="match status" value="1"/>
</dbReference>
<accession>Q46XG5</accession>
<name>QUEA_CUPPJ</name>
<keyword id="KW-0963">Cytoplasm</keyword>
<keyword id="KW-0671">Queuosine biosynthesis</keyword>
<keyword id="KW-0949">S-adenosyl-L-methionine</keyword>
<keyword id="KW-0808">Transferase</keyword>
<proteinExistence type="inferred from homology"/>
<comment type="function">
    <text evidence="1">Transfers and isomerizes the ribose moiety from AdoMet to the 7-aminomethyl group of 7-deazaguanine (preQ1-tRNA) to give epoxyqueuosine (oQ-tRNA).</text>
</comment>
<comment type="catalytic activity">
    <reaction evidence="1">
        <text>7-aminomethyl-7-carbaguanosine(34) in tRNA + S-adenosyl-L-methionine = epoxyqueuosine(34) in tRNA + adenine + L-methionine + 2 H(+)</text>
        <dbReference type="Rhea" id="RHEA:32155"/>
        <dbReference type="Rhea" id="RHEA-COMP:10342"/>
        <dbReference type="Rhea" id="RHEA-COMP:18582"/>
        <dbReference type="ChEBI" id="CHEBI:15378"/>
        <dbReference type="ChEBI" id="CHEBI:16708"/>
        <dbReference type="ChEBI" id="CHEBI:57844"/>
        <dbReference type="ChEBI" id="CHEBI:59789"/>
        <dbReference type="ChEBI" id="CHEBI:82833"/>
        <dbReference type="ChEBI" id="CHEBI:194443"/>
        <dbReference type="EC" id="2.4.99.17"/>
    </reaction>
</comment>
<comment type="pathway">
    <text evidence="1">tRNA modification; tRNA-queuosine biosynthesis.</text>
</comment>
<comment type="subunit">
    <text evidence="1">Monomer.</text>
</comment>
<comment type="subcellular location">
    <subcellularLocation>
        <location evidence="1">Cytoplasm</location>
    </subcellularLocation>
</comment>
<comment type="similarity">
    <text evidence="1">Belongs to the QueA family.</text>
</comment>
<protein>
    <recommendedName>
        <fullName evidence="1">S-adenosylmethionine:tRNA ribosyltransferase-isomerase</fullName>
        <ecNumber evidence="1">2.4.99.17</ecNumber>
    </recommendedName>
    <alternativeName>
        <fullName evidence="1">Queuosine biosynthesis protein QueA</fullName>
    </alternativeName>
</protein>
<sequence length="349" mass="38425">MLTLSDFDFPLPPELIAQSALPDRSASRLLVVERLAPGEQPDAIRLVDRAFSDIIGYLKPEDLLVFNDTRVIKARFFGQKPSGGKVEVLVERVLDTHTVLAQVRASKTPAEGSLLHLAEDAFAVTVGPRVDQFFTLRFPAPALDLIEQYGRLPLPPYITHDPDAYDETRYQTVYARNPGAVAAPTAGLHFDDALFARLDAAGVRRAFLTLHVGAGTFQPVRTENIAEHKMHSEWYAISPELADAVRETRKRGGRVIAVGTTSLRALESAAKPDGTLEAGNGDTDIFITPGYQFRLVDALITNFHLPKSTLLMLVSALAGVEAIRAAYRHAVEARYRFFSYGDAMLLTRQ</sequence>
<reference key="1">
    <citation type="journal article" date="2010" name="PLoS ONE">
        <title>The complete multipartite genome sequence of Cupriavidus necator JMP134, a versatile pollutant degrader.</title>
        <authorList>
            <person name="Lykidis A."/>
            <person name="Perez-Pantoja D."/>
            <person name="Ledger T."/>
            <person name="Mavromatis K."/>
            <person name="Anderson I.J."/>
            <person name="Ivanova N.N."/>
            <person name="Hooper S.D."/>
            <person name="Lapidus A."/>
            <person name="Lucas S."/>
            <person name="Gonzalez B."/>
            <person name="Kyrpides N.C."/>
        </authorList>
    </citation>
    <scope>NUCLEOTIDE SEQUENCE [LARGE SCALE GENOMIC DNA]</scope>
    <source>
        <strain>JMP134 / LMG 1197</strain>
    </source>
</reference>
<feature type="chain" id="PRO_0000231363" description="S-adenosylmethionine:tRNA ribosyltransferase-isomerase">
    <location>
        <begin position="1"/>
        <end position="349"/>
    </location>
</feature>
<gene>
    <name evidence="1" type="primary">queA</name>
    <name type="ordered locus">Reut_A2807</name>
</gene>